<organism>
    <name type="scientific">Xylella fastidiosa (strain 9a5c)</name>
    <dbReference type="NCBI Taxonomy" id="160492"/>
    <lineage>
        <taxon>Bacteria</taxon>
        <taxon>Pseudomonadati</taxon>
        <taxon>Pseudomonadota</taxon>
        <taxon>Gammaproteobacteria</taxon>
        <taxon>Lysobacterales</taxon>
        <taxon>Lysobacteraceae</taxon>
        <taxon>Xylella</taxon>
    </lineage>
</organism>
<evidence type="ECO:0000255" key="1">
    <source>
        <dbReference type="HAMAP-Rule" id="MF_01445"/>
    </source>
</evidence>
<name>TSAD_XYLFA</name>
<keyword id="KW-0012">Acyltransferase</keyword>
<keyword id="KW-0963">Cytoplasm</keyword>
<keyword id="KW-0408">Iron</keyword>
<keyword id="KW-0479">Metal-binding</keyword>
<keyword id="KW-0808">Transferase</keyword>
<keyword id="KW-0819">tRNA processing</keyword>
<feature type="chain" id="PRO_0000303621" description="tRNA N6-adenosine threonylcarbamoyltransferase">
    <location>
        <begin position="1"/>
        <end position="348"/>
    </location>
</feature>
<feature type="binding site" evidence="1">
    <location>
        <position position="115"/>
    </location>
    <ligand>
        <name>Fe cation</name>
        <dbReference type="ChEBI" id="CHEBI:24875"/>
    </ligand>
</feature>
<feature type="binding site" evidence="1">
    <location>
        <position position="119"/>
    </location>
    <ligand>
        <name>Fe cation</name>
        <dbReference type="ChEBI" id="CHEBI:24875"/>
    </ligand>
</feature>
<feature type="binding site" evidence="1">
    <location>
        <begin position="138"/>
        <end position="142"/>
    </location>
    <ligand>
        <name>substrate</name>
    </ligand>
</feature>
<feature type="binding site" evidence="1">
    <location>
        <position position="171"/>
    </location>
    <ligand>
        <name>substrate</name>
    </ligand>
</feature>
<feature type="binding site" evidence="1">
    <location>
        <position position="184"/>
    </location>
    <ligand>
        <name>substrate</name>
    </ligand>
</feature>
<feature type="binding site" evidence="1">
    <location>
        <position position="276"/>
    </location>
    <ligand>
        <name>substrate</name>
    </ligand>
</feature>
<feature type="binding site" evidence="1">
    <location>
        <position position="304"/>
    </location>
    <ligand>
        <name>Fe cation</name>
        <dbReference type="ChEBI" id="CHEBI:24875"/>
    </ligand>
</feature>
<reference key="1">
    <citation type="journal article" date="2000" name="Nature">
        <title>The genome sequence of the plant pathogen Xylella fastidiosa.</title>
        <authorList>
            <person name="Simpson A.J.G."/>
            <person name="Reinach F.C."/>
            <person name="Arruda P."/>
            <person name="Abreu F.A."/>
            <person name="Acencio M."/>
            <person name="Alvarenga R."/>
            <person name="Alves L.M.C."/>
            <person name="Araya J.E."/>
            <person name="Baia G.S."/>
            <person name="Baptista C.S."/>
            <person name="Barros M.H."/>
            <person name="Bonaccorsi E.D."/>
            <person name="Bordin S."/>
            <person name="Bove J.M."/>
            <person name="Briones M.R.S."/>
            <person name="Bueno M.R.P."/>
            <person name="Camargo A.A."/>
            <person name="Camargo L.E.A."/>
            <person name="Carraro D.M."/>
            <person name="Carrer H."/>
            <person name="Colauto N.B."/>
            <person name="Colombo C."/>
            <person name="Costa F.F."/>
            <person name="Costa M.C.R."/>
            <person name="Costa-Neto C.M."/>
            <person name="Coutinho L.L."/>
            <person name="Cristofani M."/>
            <person name="Dias-Neto E."/>
            <person name="Docena C."/>
            <person name="El-Dorry H."/>
            <person name="Facincani A.P."/>
            <person name="Ferreira A.J.S."/>
            <person name="Ferreira V.C.A."/>
            <person name="Ferro J.A."/>
            <person name="Fraga J.S."/>
            <person name="Franca S.C."/>
            <person name="Franco M.C."/>
            <person name="Frohme M."/>
            <person name="Furlan L.R."/>
            <person name="Garnier M."/>
            <person name="Goldman G.H."/>
            <person name="Goldman M.H.S."/>
            <person name="Gomes S.L."/>
            <person name="Gruber A."/>
            <person name="Ho P.L."/>
            <person name="Hoheisel J.D."/>
            <person name="Junqueira M.L."/>
            <person name="Kemper E.L."/>
            <person name="Kitajima J.P."/>
            <person name="Krieger J.E."/>
            <person name="Kuramae E.E."/>
            <person name="Laigret F."/>
            <person name="Lambais M.R."/>
            <person name="Leite L.C.C."/>
            <person name="Lemos E.G.M."/>
            <person name="Lemos M.V.F."/>
            <person name="Lopes S.A."/>
            <person name="Lopes C.R."/>
            <person name="Machado J.A."/>
            <person name="Machado M.A."/>
            <person name="Madeira A.M.B.N."/>
            <person name="Madeira H.M.F."/>
            <person name="Marino C.L."/>
            <person name="Marques M.V."/>
            <person name="Martins E.A.L."/>
            <person name="Martins E.M.F."/>
            <person name="Matsukuma A.Y."/>
            <person name="Menck C.F.M."/>
            <person name="Miracca E.C."/>
            <person name="Miyaki C.Y."/>
            <person name="Monteiro-Vitorello C.B."/>
            <person name="Moon D.H."/>
            <person name="Nagai M.A."/>
            <person name="Nascimento A.L.T.O."/>
            <person name="Netto L.E.S."/>
            <person name="Nhani A. Jr."/>
            <person name="Nobrega F.G."/>
            <person name="Nunes L.R."/>
            <person name="Oliveira M.A."/>
            <person name="de Oliveira M.C."/>
            <person name="de Oliveira R.C."/>
            <person name="Palmieri D.A."/>
            <person name="Paris A."/>
            <person name="Peixoto B.R."/>
            <person name="Pereira G.A.G."/>
            <person name="Pereira H.A. Jr."/>
            <person name="Pesquero J.B."/>
            <person name="Quaggio R.B."/>
            <person name="Roberto P.G."/>
            <person name="Rodrigues V."/>
            <person name="de Rosa A.J.M."/>
            <person name="de Rosa V.E. Jr."/>
            <person name="de Sa R.G."/>
            <person name="Santelli R.V."/>
            <person name="Sawasaki H.E."/>
            <person name="da Silva A.C.R."/>
            <person name="da Silva A.M."/>
            <person name="da Silva F.R."/>
            <person name="Silva W.A. Jr."/>
            <person name="da Silveira J.F."/>
            <person name="Silvestri M.L.Z."/>
            <person name="Siqueira W.J."/>
            <person name="de Souza A.A."/>
            <person name="de Souza A.P."/>
            <person name="Terenzi M.F."/>
            <person name="Truffi D."/>
            <person name="Tsai S.M."/>
            <person name="Tsuhako M.H."/>
            <person name="Vallada H."/>
            <person name="Van Sluys M.A."/>
            <person name="Verjovski-Almeida S."/>
            <person name="Vettore A.L."/>
            <person name="Zago M.A."/>
            <person name="Zatz M."/>
            <person name="Meidanis J."/>
            <person name="Setubal J.C."/>
        </authorList>
    </citation>
    <scope>NUCLEOTIDE SEQUENCE [LARGE SCALE GENOMIC DNA]</scope>
    <source>
        <strain>9a5c</strain>
    </source>
</reference>
<gene>
    <name evidence="1" type="primary">tsaD</name>
    <name type="synonym">gcp</name>
    <name type="ordered locus">XF_0435</name>
</gene>
<proteinExistence type="inferred from homology"/>
<accession>Q9PG67</accession>
<comment type="function">
    <text evidence="1">Required for the formation of a threonylcarbamoyl group on adenosine at position 37 (t(6)A37) in tRNAs that read codons beginning with adenine. Is involved in the transfer of the threonylcarbamoyl moiety of threonylcarbamoyl-AMP (TC-AMP) to the N6 group of A37, together with TsaE and TsaB. TsaD likely plays a direct catalytic role in this reaction.</text>
</comment>
<comment type="catalytic activity">
    <reaction evidence="1">
        <text>L-threonylcarbamoyladenylate + adenosine(37) in tRNA = N(6)-L-threonylcarbamoyladenosine(37) in tRNA + AMP + H(+)</text>
        <dbReference type="Rhea" id="RHEA:37059"/>
        <dbReference type="Rhea" id="RHEA-COMP:10162"/>
        <dbReference type="Rhea" id="RHEA-COMP:10163"/>
        <dbReference type="ChEBI" id="CHEBI:15378"/>
        <dbReference type="ChEBI" id="CHEBI:73682"/>
        <dbReference type="ChEBI" id="CHEBI:74411"/>
        <dbReference type="ChEBI" id="CHEBI:74418"/>
        <dbReference type="ChEBI" id="CHEBI:456215"/>
        <dbReference type="EC" id="2.3.1.234"/>
    </reaction>
</comment>
<comment type="cofactor">
    <cofactor evidence="1">
        <name>Fe(2+)</name>
        <dbReference type="ChEBI" id="CHEBI:29033"/>
    </cofactor>
    <text evidence="1">Binds 1 Fe(2+) ion per subunit.</text>
</comment>
<comment type="subcellular location">
    <subcellularLocation>
        <location evidence="1">Cytoplasm</location>
    </subcellularLocation>
</comment>
<comment type="similarity">
    <text evidence="1">Belongs to the KAE1 / TsaD family.</text>
</comment>
<sequence length="348" mass="36798">MKIIGIESSCDETGVAVYDTALSGFAALRAHSVYSQVALHAEYGGVVPELASRDHVRKLLPLLRQTLAEAKLSVEELDGVAYTAGPGLVGALLVGAGVARALAWALEVPAIGVHHMEGHLLSPLLEDDPPEVPFVALLVSGGHTQLVAVDAIGDYRLLGETLDDAAGEAFDKVAKLMGLPYPGGPQLAALAEQGIPGRFCFTRPMVDRPGLDFSFSGLKTQVLLAWRNSDQSDAIRVDVARGFEDAVVDTLAIKCERALDTVACQTLVVAGGVGANKCLRARLQAMCRQRGGRACFPRPALCTDNGAMIAFAGALRLQAGQQSDIAVRVTPRWDMAALPPLVSRSCRR</sequence>
<dbReference type="EC" id="2.3.1.234" evidence="1"/>
<dbReference type="EMBL" id="AE003849">
    <property type="protein sequence ID" value="AAF83245.1"/>
    <property type="molecule type" value="Genomic_DNA"/>
</dbReference>
<dbReference type="PIR" id="D82807">
    <property type="entry name" value="D82807"/>
</dbReference>
<dbReference type="RefSeq" id="WP_010892964.1">
    <property type="nucleotide sequence ID" value="NC_002488.3"/>
</dbReference>
<dbReference type="SMR" id="Q9PG67"/>
<dbReference type="STRING" id="160492.XF_0435"/>
<dbReference type="KEGG" id="xfa:XF_0435"/>
<dbReference type="eggNOG" id="COG0533">
    <property type="taxonomic scope" value="Bacteria"/>
</dbReference>
<dbReference type="HOGENOM" id="CLU_023208_0_0_6"/>
<dbReference type="Proteomes" id="UP000000812">
    <property type="component" value="Chromosome"/>
</dbReference>
<dbReference type="GO" id="GO:0005737">
    <property type="term" value="C:cytoplasm"/>
    <property type="evidence" value="ECO:0007669"/>
    <property type="project" value="UniProtKB-SubCell"/>
</dbReference>
<dbReference type="GO" id="GO:0005506">
    <property type="term" value="F:iron ion binding"/>
    <property type="evidence" value="ECO:0007669"/>
    <property type="project" value="UniProtKB-UniRule"/>
</dbReference>
<dbReference type="GO" id="GO:0061711">
    <property type="term" value="F:N(6)-L-threonylcarbamoyladenine synthase activity"/>
    <property type="evidence" value="ECO:0007669"/>
    <property type="project" value="UniProtKB-EC"/>
</dbReference>
<dbReference type="GO" id="GO:0002949">
    <property type="term" value="P:tRNA threonylcarbamoyladenosine modification"/>
    <property type="evidence" value="ECO:0007669"/>
    <property type="project" value="UniProtKB-UniRule"/>
</dbReference>
<dbReference type="CDD" id="cd24133">
    <property type="entry name" value="ASKHA_NBD_TsaD_bac"/>
    <property type="match status" value="1"/>
</dbReference>
<dbReference type="FunFam" id="3.30.420.40:FF:000040">
    <property type="entry name" value="tRNA N6-adenosine threonylcarbamoyltransferase"/>
    <property type="match status" value="1"/>
</dbReference>
<dbReference type="Gene3D" id="3.30.420.40">
    <property type="match status" value="2"/>
</dbReference>
<dbReference type="HAMAP" id="MF_01445">
    <property type="entry name" value="TsaD"/>
    <property type="match status" value="1"/>
</dbReference>
<dbReference type="InterPro" id="IPR043129">
    <property type="entry name" value="ATPase_NBD"/>
</dbReference>
<dbReference type="InterPro" id="IPR000905">
    <property type="entry name" value="Gcp-like_dom"/>
</dbReference>
<dbReference type="InterPro" id="IPR017861">
    <property type="entry name" value="KAE1/TsaD"/>
</dbReference>
<dbReference type="InterPro" id="IPR022450">
    <property type="entry name" value="TsaD"/>
</dbReference>
<dbReference type="NCBIfam" id="TIGR00329">
    <property type="entry name" value="gcp_kae1"/>
    <property type="match status" value="1"/>
</dbReference>
<dbReference type="NCBIfam" id="TIGR03723">
    <property type="entry name" value="T6A_TsaD_YgjD"/>
    <property type="match status" value="1"/>
</dbReference>
<dbReference type="PANTHER" id="PTHR11735">
    <property type="entry name" value="TRNA N6-ADENOSINE THREONYLCARBAMOYLTRANSFERASE"/>
    <property type="match status" value="1"/>
</dbReference>
<dbReference type="PANTHER" id="PTHR11735:SF6">
    <property type="entry name" value="TRNA N6-ADENOSINE THREONYLCARBAMOYLTRANSFERASE, MITOCHONDRIAL"/>
    <property type="match status" value="1"/>
</dbReference>
<dbReference type="Pfam" id="PF00814">
    <property type="entry name" value="TsaD"/>
    <property type="match status" value="1"/>
</dbReference>
<dbReference type="PRINTS" id="PR00789">
    <property type="entry name" value="OSIALOPTASE"/>
</dbReference>
<dbReference type="SUPFAM" id="SSF53067">
    <property type="entry name" value="Actin-like ATPase domain"/>
    <property type="match status" value="2"/>
</dbReference>
<protein>
    <recommendedName>
        <fullName evidence="1">tRNA N6-adenosine threonylcarbamoyltransferase</fullName>
        <ecNumber evidence="1">2.3.1.234</ecNumber>
    </recommendedName>
    <alternativeName>
        <fullName evidence="1">N6-L-threonylcarbamoyladenine synthase</fullName>
        <shortName evidence="1">t(6)A synthase</shortName>
    </alternativeName>
    <alternativeName>
        <fullName evidence="1">t(6)A37 threonylcarbamoyladenosine biosynthesis protein TsaD</fullName>
    </alternativeName>
    <alternativeName>
        <fullName evidence="1">tRNA threonylcarbamoyladenosine biosynthesis protein TsaD</fullName>
    </alternativeName>
</protein>